<sequence length="359" mass="40356">MVSLPKDRMRQLEKRFEIIESQMAKNPDSGTYVKLASEYADLQPIVTSIRTLNALSIEITELETIISDKLTDVEMRNLAQEELPPLFQKMEKLEKELQILLLPKDITDEKSAIIEIRAGTGGSEAALFVGDLFRMYERYANAYNWKVEVISLNEGEVGGYKEIIATISGKGVFSKLKFESGVHRVQRVPETETSGRIHTSAATVAVLPEAEEIDIEIRPEDIRIDTMRASGAGGQHVNTTDSAVRITHIPTGIMVVQAEKSQHQNRARALQILRARLFDIEQKKAESERSASRKNQVGSGDRSERIRTYNFPQGRVTDHRINLTLYKLDRILEGDLDELINALISDYQTALLTEMDGNG</sequence>
<name>RF1_BARQU</name>
<accession>Q6G0R0</accession>
<evidence type="ECO:0000255" key="1">
    <source>
        <dbReference type="HAMAP-Rule" id="MF_00093"/>
    </source>
</evidence>
<evidence type="ECO:0000256" key="2">
    <source>
        <dbReference type="SAM" id="MobiDB-lite"/>
    </source>
</evidence>
<protein>
    <recommendedName>
        <fullName evidence="1">Peptide chain release factor 1</fullName>
        <shortName evidence="1">RF-1</shortName>
    </recommendedName>
</protein>
<proteinExistence type="inferred from homology"/>
<keyword id="KW-0963">Cytoplasm</keyword>
<keyword id="KW-0488">Methylation</keyword>
<keyword id="KW-0648">Protein biosynthesis</keyword>
<organism>
    <name type="scientific">Bartonella quintana (strain Toulouse)</name>
    <name type="common">Rochalimaea quintana</name>
    <dbReference type="NCBI Taxonomy" id="283165"/>
    <lineage>
        <taxon>Bacteria</taxon>
        <taxon>Pseudomonadati</taxon>
        <taxon>Pseudomonadota</taxon>
        <taxon>Alphaproteobacteria</taxon>
        <taxon>Hyphomicrobiales</taxon>
        <taxon>Bartonellaceae</taxon>
        <taxon>Bartonella</taxon>
    </lineage>
</organism>
<dbReference type="EMBL" id="BX897700">
    <property type="protein sequence ID" value="CAF25688.1"/>
    <property type="molecule type" value="Genomic_DNA"/>
</dbReference>
<dbReference type="RefSeq" id="WP_011179003.1">
    <property type="nucleotide sequence ID" value="NC_005955.1"/>
</dbReference>
<dbReference type="SMR" id="Q6G0R0"/>
<dbReference type="KEGG" id="bqu:BQ01850"/>
<dbReference type="eggNOG" id="COG0216">
    <property type="taxonomic scope" value="Bacteria"/>
</dbReference>
<dbReference type="HOGENOM" id="CLU_036856_0_1_5"/>
<dbReference type="OrthoDB" id="9806673at2"/>
<dbReference type="Proteomes" id="UP000000597">
    <property type="component" value="Chromosome"/>
</dbReference>
<dbReference type="GO" id="GO:0005737">
    <property type="term" value="C:cytoplasm"/>
    <property type="evidence" value="ECO:0007669"/>
    <property type="project" value="UniProtKB-SubCell"/>
</dbReference>
<dbReference type="GO" id="GO:0016149">
    <property type="term" value="F:translation release factor activity, codon specific"/>
    <property type="evidence" value="ECO:0007669"/>
    <property type="project" value="UniProtKB-UniRule"/>
</dbReference>
<dbReference type="FunFam" id="3.30.160.20:FF:000004">
    <property type="entry name" value="Peptide chain release factor 1"/>
    <property type="match status" value="1"/>
</dbReference>
<dbReference type="FunFam" id="3.30.70.1660:FF:000002">
    <property type="entry name" value="Peptide chain release factor 1"/>
    <property type="match status" value="1"/>
</dbReference>
<dbReference type="FunFam" id="3.30.70.1660:FF:000004">
    <property type="entry name" value="Peptide chain release factor 1"/>
    <property type="match status" value="1"/>
</dbReference>
<dbReference type="Gene3D" id="3.30.160.20">
    <property type="match status" value="1"/>
</dbReference>
<dbReference type="Gene3D" id="3.30.70.1660">
    <property type="match status" value="2"/>
</dbReference>
<dbReference type="Gene3D" id="6.10.140.1950">
    <property type="match status" value="1"/>
</dbReference>
<dbReference type="HAMAP" id="MF_00093">
    <property type="entry name" value="Rel_fac_1"/>
    <property type="match status" value="1"/>
</dbReference>
<dbReference type="InterPro" id="IPR005139">
    <property type="entry name" value="PCRF"/>
</dbReference>
<dbReference type="InterPro" id="IPR000352">
    <property type="entry name" value="Pep_chain_release_fac_I"/>
</dbReference>
<dbReference type="InterPro" id="IPR045853">
    <property type="entry name" value="Pep_chain_release_fac_I_sf"/>
</dbReference>
<dbReference type="InterPro" id="IPR050057">
    <property type="entry name" value="Prokaryotic/Mito_RF"/>
</dbReference>
<dbReference type="InterPro" id="IPR004373">
    <property type="entry name" value="RF-1"/>
</dbReference>
<dbReference type="NCBIfam" id="TIGR00019">
    <property type="entry name" value="prfA"/>
    <property type="match status" value="1"/>
</dbReference>
<dbReference type="NCBIfam" id="NF001859">
    <property type="entry name" value="PRK00591.1"/>
    <property type="match status" value="1"/>
</dbReference>
<dbReference type="PANTHER" id="PTHR43804">
    <property type="entry name" value="LD18447P"/>
    <property type="match status" value="1"/>
</dbReference>
<dbReference type="PANTHER" id="PTHR43804:SF7">
    <property type="entry name" value="LD18447P"/>
    <property type="match status" value="1"/>
</dbReference>
<dbReference type="Pfam" id="PF03462">
    <property type="entry name" value="PCRF"/>
    <property type="match status" value="1"/>
</dbReference>
<dbReference type="Pfam" id="PF00472">
    <property type="entry name" value="RF-1"/>
    <property type="match status" value="1"/>
</dbReference>
<dbReference type="SMART" id="SM00937">
    <property type="entry name" value="PCRF"/>
    <property type="match status" value="1"/>
</dbReference>
<dbReference type="SUPFAM" id="SSF75620">
    <property type="entry name" value="Release factor"/>
    <property type="match status" value="1"/>
</dbReference>
<dbReference type="PROSITE" id="PS00745">
    <property type="entry name" value="RF_PROK_I"/>
    <property type="match status" value="1"/>
</dbReference>
<gene>
    <name evidence="1" type="primary">prfA</name>
    <name type="ordered locus">BQ01850</name>
</gene>
<comment type="function">
    <text evidence="1">Peptide chain release factor 1 directs the termination of translation in response to the peptide chain termination codons UAG and UAA.</text>
</comment>
<comment type="subcellular location">
    <subcellularLocation>
        <location evidence="1">Cytoplasm</location>
    </subcellularLocation>
</comment>
<comment type="PTM">
    <text evidence="1">Methylated by PrmC. Methylation increases the termination efficiency of RF1.</text>
</comment>
<comment type="similarity">
    <text evidence="1">Belongs to the prokaryotic/mitochondrial release factor family.</text>
</comment>
<feature type="chain" id="PRO_0000177636" description="Peptide chain release factor 1">
    <location>
        <begin position="1"/>
        <end position="359"/>
    </location>
</feature>
<feature type="region of interest" description="Disordered" evidence="2">
    <location>
        <begin position="284"/>
        <end position="311"/>
    </location>
</feature>
<feature type="modified residue" description="N5-methylglutamine" evidence="1">
    <location>
        <position position="235"/>
    </location>
</feature>
<reference key="1">
    <citation type="journal article" date="2004" name="Proc. Natl. Acad. Sci. U.S.A.">
        <title>The louse-borne human pathogen Bartonella quintana is a genomic derivative of the zoonotic agent Bartonella henselae.</title>
        <authorList>
            <person name="Alsmark U.C.M."/>
            <person name="Frank A.C."/>
            <person name="Karlberg E.O."/>
            <person name="Legault B.-A."/>
            <person name="Ardell D.H."/>
            <person name="Canbaeck B."/>
            <person name="Eriksson A.-S."/>
            <person name="Naeslund A.K."/>
            <person name="Handley S.A."/>
            <person name="Huvet M."/>
            <person name="La Scola B."/>
            <person name="Holmberg M."/>
            <person name="Andersson S.G.E."/>
        </authorList>
    </citation>
    <scope>NUCLEOTIDE SEQUENCE [LARGE SCALE GENOMIC DNA]</scope>
    <source>
        <strain>Toulouse</strain>
    </source>
</reference>